<organism>
    <name type="scientific">Bos taurus</name>
    <name type="common">Bovine</name>
    <dbReference type="NCBI Taxonomy" id="9913"/>
    <lineage>
        <taxon>Eukaryota</taxon>
        <taxon>Metazoa</taxon>
        <taxon>Chordata</taxon>
        <taxon>Craniata</taxon>
        <taxon>Vertebrata</taxon>
        <taxon>Euteleostomi</taxon>
        <taxon>Mammalia</taxon>
        <taxon>Eutheria</taxon>
        <taxon>Laurasiatheria</taxon>
        <taxon>Artiodactyla</taxon>
        <taxon>Ruminantia</taxon>
        <taxon>Pecora</taxon>
        <taxon>Bovidae</taxon>
        <taxon>Bovinae</taxon>
        <taxon>Bos</taxon>
    </lineage>
</organism>
<protein>
    <recommendedName>
        <fullName>Serum amyloid A-3 protein</fullName>
    </recommendedName>
</protein>
<feature type="signal peptide" evidence="1">
    <location>
        <begin position="1"/>
        <end position="18"/>
    </location>
</feature>
<feature type="chain" id="PRO_5015099354" description="Serum amyloid A-3 protein" evidence="1">
    <location>
        <begin position="19"/>
        <end position="131"/>
    </location>
</feature>
<feature type="region of interest" description="Disordered" evidence="3">
    <location>
        <begin position="94"/>
        <end position="131"/>
    </location>
</feature>
<feature type="compositionally biased region" description="Basic and acidic residues" evidence="3">
    <location>
        <begin position="94"/>
        <end position="105"/>
    </location>
</feature>
<feature type="sequence variant" description="In allele SAA3.2." evidence="7">
    <original>R</original>
    <variation>K</variation>
    <location>
        <position position="48"/>
    </location>
</feature>
<feature type="sequence variant" description="In allele SAA3.2." evidence="7">
    <original>R</original>
    <variation>Q</variation>
    <location>
        <position position="64"/>
    </location>
</feature>
<feature type="sequence variant" description="In allele SAA3.2." evidence="7">
    <original>G</original>
    <variation>C</variation>
    <location>
        <position position="93"/>
    </location>
</feature>
<feature type="sequence variant" description="In allele SAA3.2." evidence="7 8">
    <original>F</original>
    <variation>A</variation>
    <location>
        <position position="108"/>
    </location>
</feature>
<feature type="sequence conflict" description="In Ref. 5; AAX57025." evidence="9" ref="5">
    <original>D</original>
    <variation>N</variation>
    <location>
        <position position="129"/>
    </location>
</feature>
<proteinExistence type="evidence at protein level"/>
<keyword id="KW-0011">Acute phase</keyword>
<keyword id="KW-0903">Direct protein sequencing</keyword>
<keyword id="KW-0345">HDL</keyword>
<keyword id="KW-1185">Reference proteome</keyword>
<keyword id="KW-0964">Secreted</keyword>
<keyword id="KW-0732">Signal</keyword>
<sequence>MNLSTGIIFCFLILGVSSQRWGTFLKEAGQGAKDMWRAYQDMKEANYRGADKYFHARGNYDAARRGPGGAWAAKVISNARETIQGITDPLFKGMTRDQVREDSKADQFANEWGRSGKDPNHFRPAGLPDKY</sequence>
<name>SAA3_BOVIN</name>
<gene>
    <name type="primary">SAA3</name>
</gene>
<comment type="function">
    <text evidence="2 7 10">Major acute phase reactant. Apolipoprotein of the HDL complex (By similarity). May have a role in protection of the mammary gland during remodeling and infection (Probable). In vitro exhibits antimicrobial activity against Escherichia coli, Streptococcus uberis and Pseudomonas aeruginosa (PubMed:19283521).</text>
</comment>
<comment type="subcellular location">
    <subcellularLocation>
        <location evidence="5 7">Secreted</location>
    </subcellularLocation>
</comment>
<comment type="tissue specificity">
    <text evidence="4 6 7">Expressed in the liver (PubMed:19283521). Expressed in mammary epithelial cells (PubMed:11048944, PubMed:16837143, PubMed:19283521). Expressed at high levels in mammary ductal cells and vesicle engorged alveoli, but absent from stromal and connective tissue and leukocytes (PubMed:19283521). Secreted into colostrum and mastitic milk (at protein level) (PubMed:16837143, PubMed:19283521). Low expression levels, if any, in normal milk (at protein level) (PubMed:16837143, PubMed:19283521).</text>
</comment>
<comment type="developmental stage">
    <text evidence="4 7">Expressed at a moderate level in late pregnancy, at a low level through lactation, induced early in milk stasis, and expressed at high levels in most mammary epithelial cells during mid to late involution and inflammation/mastitis.</text>
</comment>
<comment type="induction">
    <text evidence="6">Up-regulated by Gram-negative bacterial lipopolysaccharide (LPS) and the Gram-positive bacterial lipoteichoic acid (LTA) in mammary epithelial cells and to a lesser extent by prolactin/PRL.</text>
</comment>
<comment type="similarity">
    <text evidence="9">Belongs to the SAA family.</text>
</comment>
<comment type="sequence caution" evidence="9">
    <conflict type="frameshift">
        <sequence resource="EMBL-CDS" id="AAF77630"/>
    </conflict>
</comment>
<reference key="1">
    <citation type="journal article" date="2000" name="J. Anim. Sci.">
        <title>Rapid communication: cloning of bovine serum amyloid A3 cDNA.</title>
        <authorList>
            <person name="Kho Y.J."/>
            <person name="Cho K.K."/>
            <person name="Kim S.C."/>
            <person name="Kim S.H."/>
            <person name="Chung M.I."/>
            <person name="Baik M.G."/>
            <person name="Choi Y.J."/>
        </authorList>
    </citation>
    <scope>NUCLEOTIDE SEQUENCE [MRNA]</scope>
    <source>
        <tissue>Mammary gland</tissue>
    </source>
</reference>
<reference key="2">
    <citation type="journal article" date="2001" name="Vet. Immunol. Immunopathol.">
        <title>Elevated extrahepatic expression and secretion of mammary-associated serum amyloid A 3 (M-SAA3) into colostrum.</title>
        <authorList>
            <person name="McDonald T.L."/>
            <person name="Larson M.A."/>
            <person name="Mack D.R."/>
            <person name="Weber A."/>
        </authorList>
    </citation>
    <scope>NUCLEOTIDE SEQUENCE [MRNA]</scope>
    <scope>PROTEIN SEQUENCE OF 21-39; 49-57; 66-74; 81-92 AND 115-131</scope>
    <scope>SUBCELLULAR LOCATION</scope>
    <scope>TISSUE SPECIFICITY</scope>
    <scope>DEVELOPMENTAL STAGE</scope>
    <source>
        <tissue>Mammary gland</tissue>
    </source>
</reference>
<reference key="3">
    <citation type="submission" date="2002-08" db="EMBL/GenBank/DDBJ databases">
        <title>Differential gene expression of Mycobacterium bovis infected bovine macrophages.</title>
        <authorList>
            <person name="Gutierrez-Pabello J.A."/>
            <person name="Barthel R."/>
            <person name="Adams G."/>
        </authorList>
    </citation>
    <scope>NUCLEOTIDE SEQUENCE [MRNA]</scope>
</reference>
<reference key="4">
    <citation type="journal article" date="2006" name="Gene">
        <title>Bovine serum amyloid A3 gene structure and promoter analysis: induced transcriptional expression by bacterial components and the hormone prolactin.</title>
        <authorList>
            <person name="Larson M.A."/>
            <person name="Weber A."/>
            <person name="McDonald T.L."/>
        </authorList>
    </citation>
    <scope>NUCLEOTIDE SEQUENCE [GENOMIC DNA]</scope>
    <scope>TISSUE SPECIFICITY</scope>
    <scope>INDUCTION BY LPS; LTA AND PRL</scope>
</reference>
<reference key="5">
    <citation type="journal article" date="2009" name="Biomarkers">
        <title>The acute-phase protein serum amyloid A3 is expressed in the bovine mammary gland and plays a role in host defence.</title>
        <authorList>
            <person name="Molenaar A.J."/>
            <person name="Harris D.P."/>
            <person name="Rajan G.H."/>
            <person name="Pearson M.L."/>
            <person name="Callaghan M.R."/>
            <person name="Sommer L."/>
            <person name="Farr V.C."/>
            <person name="Oden K.E."/>
            <person name="Miles M.C."/>
            <person name="Petrova R.S."/>
            <person name="Good L.L."/>
            <person name="Singh K."/>
            <person name="McLaren R.D."/>
            <person name="Prosser C.G."/>
            <person name="Kim K.S."/>
            <person name="Wieliczko R.J."/>
            <person name="Dines M.H."/>
            <person name="Johannessen K.M."/>
            <person name="Grigor M.R."/>
            <person name="Davis S.R."/>
            <person name="Stelwagen K."/>
        </authorList>
    </citation>
    <scope>NUCLEOTIDE SEQUENCE [MRNA] (ALLELE SAA3.2)</scope>
    <scope>FUNCTION</scope>
    <scope>SUBCELLULAR LOCATION</scope>
    <scope>TISSUE SPECIFICITY</scope>
    <scope>DEVELOPMENTAL STAGE</scope>
    <source>
        <tissue>Mammary gland</tissue>
    </source>
</reference>
<reference key="6">
    <citation type="submission" date="2014-02" db="EMBL/GenBank/DDBJ databases">
        <title>Serum amyloid A (SAA3) has a potential to act as an early biomarker in bovine subclinical mastitis.</title>
        <authorList>
            <person name="Singh G."/>
            <person name="Bhardwaj B."/>
            <person name="Verma S."/>
        </authorList>
    </citation>
    <scope>NUCLEOTIDE SEQUENCE [MRNA]</scope>
    <scope>VARIANT ALA-108</scope>
</reference>
<reference key="7">
    <citation type="submission" date="2005-10" db="EMBL/GenBank/DDBJ databases">
        <authorList>
            <consortium name="NIH - Mammalian Gene Collection (MGC) project"/>
        </authorList>
    </citation>
    <scope>NUCLEOTIDE SEQUENCE [LARGE SCALE MRNA]</scope>
    <source>
        <strain>Crossbred X Angus</strain>
        <tissue>Liver</tissue>
    </source>
</reference>
<accession>Q8SQ28</accession>
<accession>A0A023VWT2</accession>
<accession>Q32PB7</accession>
<accession>Q56J78</accession>
<accession>Q9MZT5</accession>
<dbReference type="EMBL" id="AF160867">
    <property type="protein sequence ID" value="AAF77630.1"/>
    <property type="status" value="ALT_FRAME"/>
    <property type="molecule type" value="mRNA"/>
</dbReference>
<dbReference type="EMBL" id="AF335552">
    <property type="protein sequence ID" value="AAM11538.1"/>
    <property type="molecule type" value="mRNA"/>
</dbReference>
<dbReference type="EMBL" id="AF540564">
    <property type="protein sequence ID" value="AAN17326.1"/>
    <property type="molecule type" value="mRNA"/>
</dbReference>
<dbReference type="EMBL" id="DQ298246">
    <property type="protein sequence ID" value="ABC00875.1"/>
    <property type="molecule type" value="Genomic_DNA"/>
</dbReference>
<dbReference type="EMBL" id="AY943216">
    <property type="protein sequence ID" value="AAX57025.1"/>
    <property type="molecule type" value="mRNA"/>
</dbReference>
<dbReference type="EMBL" id="KJ463389">
    <property type="protein sequence ID" value="AHY20046.1"/>
    <property type="molecule type" value="mRNA"/>
</dbReference>
<dbReference type="EMBL" id="BC108181">
    <property type="protein sequence ID" value="AAI08182.1"/>
    <property type="molecule type" value="mRNA"/>
</dbReference>
<dbReference type="RefSeq" id="NP_001229502.1">
    <property type="nucleotide sequence ID" value="NM_001242573.1"/>
</dbReference>
<dbReference type="RefSeq" id="NP_851359.2">
    <property type="nucleotide sequence ID" value="NM_181016.3"/>
</dbReference>
<dbReference type="SMR" id="Q8SQ28"/>
<dbReference type="GeneID" id="281474"/>
<dbReference type="GeneID" id="618238"/>
<dbReference type="KEGG" id="bta:281474"/>
<dbReference type="KEGG" id="bta:618238"/>
<dbReference type="CTD" id="20210"/>
<dbReference type="CTD" id="618238"/>
<dbReference type="HOGENOM" id="CLU_129936_0_0_1"/>
<dbReference type="OrthoDB" id="6112826at2759"/>
<dbReference type="Proteomes" id="UP000009136">
    <property type="component" value="Unplaced"/>
</dbReference>
<dbReference type="GO" id="GO:0034364">
    <property type="term" value="C:high-density lipoprotein particle"/>
    <property type="evidence" value="ECO:0007669"/>
    <property type="project" value="UniProtKB-KW"/>
</dbReference>
<dbReference type="GO" id="GO:0006953">
    <property type="term" value="P:acute-phase response"/>
    <property type="evidence" value="ECO:0007669"/>
    <property type="project" value="UniProtKB-KW"/>
</dbReference>
<dbReference type="FunFam" id="1.10.132.110:FF:000001">
    <property type="entry name" value="Serum amyloid A protein"/>
    <property type="match status" value="1"/>
</dbReference>
<dbReference type="Gene3D" id="1.10.132.110">
    <property type="entry name" value="Serum amyloid A protein"/>
    <property type="match status" value="1"/>
</dbReference>
<dbReference type="InterPro" id="IPR000096">
    <property type="entry name" value="Serum_amyloid_A"/>
</dbReference>
<dbReference type="InterPro" id="IPR052464">
    <property type="entry name" value="Synovial_Prolif_Regulator"/>
</dbReference>
<dbReference type="PANTHER" id="PTHR23424">
    <property type="entry name" value="SERUM AMYLOID A"/>
    <property type="match status" value="1"/>
</dbReference>
<dbReference type="PANTHER" id="PTHR23424:SF31">
    <property type="entry name" value="SERUM AMYLOID A-3 PROTEIN"/>
    <property type="match status" value="1"/>
</dbReference>
<dbReference type="Pfam" id="PF00277">
    <property type="entry name" value="SAA"/>
    <property type="match status" value="1"/>
</dbReference>
<dbReference type="PIRSF" id="PIRSF002472">
    <property type="entry name" value="Serum_amyloid_A"/>
    <property type="match status" value="1"/>
</dbReference>
<dbReference type="PRINTS" id="PR00306">
    <property type="entry name" value="SERUMAMYLOID"/>
</dbReference>
<dbReference type="SMART" id="SM00197">
    <property type="entry name" value="SAA"/>
    <property type="match status" value="1"/>
</dbReference>
<dbReference type="PROSITE" id="PS00992">
    <property type="entry name" value="SAA"/>
    <property type="match status" value="1"/>
</dbReference>
<evidence type="ECO:0000255" key="1"/>
<evidence type="ECO:0000255" key="2">
    <source>
        <dbReference type="RuleBase" id="RU000539"/>
    </source>
</evidence>
<evidence type="ECO:0000256" key="3">
    <source>
        <dbReference type="SAM" id="MobiDB-lite"/>
    </source>
</evidence>
<evidence type="ECO:0000269" key="4">
    <source>
    </source>
</evidence>
<evidence type="ECO:0000269" key="5">
    <source>
    </source>
</evidence>
<evidence type="ECO:0000269" key="6">
    <source>
    </source>
</evidence>
<evidence type="ECO:0000269" key="7">
    <source>
    </source>
</evidence>
<evidence type="ECO:0000269" key="8">
    <source ref="6"/>
</evidence>
<evidence type="ECO:0000305" key="9"/>
<evidence type="ECO:0000305" key="10">
    <source>
    </source>
</evidence>